<accession>Q8P336</accession>
<evidence type="ECO:0000255" key="1">
    <source>
        <dbReference type="HAMAP-Rule" id="MF_00595"/>
    </source>
</evidence>
<feature type="chain" id="PRO_0000166652" description="Phosphoenolpyruvate carboxylase">
    <location>
        <begin position="1"/>
        <end position="904"/>
    </location>
</feature>
<feature type="active site" evidence="1">
    <location>
        <position position="151"/>
    </location>
</feature>
<feature type="active site" evidence="1">
    <location>
        <position position="570"/>
    </location>
</feature>
<dbReference type="EC" id="4.1.1.31" evidence="1"/>
<dbReference type="EMBL" id="AE008922">
    <property type="protein sequence ID" value="AAM40069.1"/>
    <property type="molecule type" value="Genomic_DNA"/>
</dbReference>
<dbReference type="RefSeq" id="NP_636145.1">
    <property type="nucleotide sequence ID" value="NC_003902.1"/>
</dbReference>
<dbReference type="RefSeq" id="WP_011035990.1">
    <property type="nucleotide sequence ID" value="NC_003902.1"/>
</dbReference>
<dbReference type="SMR" id="Q8P336"/>
<dbReference type="STRING" id="190485.XCC0754"/>
<dbReference type="EnsemblBacteria" id="AAM40069">
    <property type="protein sequence ID" value="AAM40069"/>
    <property type="gene ID" value="XCC0754"/>
</dbReference>
<dbReference type="KEGG" id="xcc:XCC0754"/>
<dbReference type="PATRIC" id="fig|190485.4.peg.822"/>
<dbReference type="eggNOG" id="COG2352">
    <property type="taxonomic scope" value="Bacteria"/>
</dbReference>
<dbReference type="HOGENOM" id="CLU_006557_2_0_6"/>
<dbReference type="OrthoDB" id="9768133at2"/>
<dbReference type="Proteomes" id="UP000001010">
    <property type="component" value="Chromosome"/>
</dbReference>
<dbReference type="GO" id="GO:0005829">
    <property type="term" value="C:cytosol"/>
    <property type="evidence" value="ECO:0000318"/>
    <property type="project" value="GO_Central"/>
</dbReference>
<dbReference type="GO" id="GO:0000287">
    <property type="term" value="F:magnesium ion binding"/>
    <property type="evidence" value="ECO:0007669"/>
    <property type="project" value="UniProtKB-UniRule"/>
</dbReference>
<dbReference type="GO" id="GO:0008964">
    <property type="term" value="F:phosphoenolpyruvate carboxylase activity"/>
    <property type="evidence" value="ECO:0000318"/>
    <property type="project" value="GO_Central"/>
</dbReference>
<dbReference type="GO" id="GO:0015977">
    <property type="term" value="P:carbon fixation"/>
    <property type="evidence" value="ECO:0007669"/>
    <property type="project" value="UniProtKB-UniRule"/>
</dbReference>
<dbReference type="GO" id="GO:0006107">
    <property type="term" value="P:oxaloacetate metabolic process"/>
    <property type="evidence" value="ECO:0007669"/>
    <property type="project" value="UniProtKB-UniRule"/>
</dbReference>
<dbReference type="GO" id="GO:0006099">
    <property type="term" value="P:tricarboxylic acid cycle"/>
    <property type="evidence" value="ECO:0007669"/>
    <property type="project" value="InterPro"/>
</dbReference>
<dbReference type="Gene3D" id="1.20.1440.90">
    <property type="entry name" value="Phosphoenolpyruvate/pyruvate domain"/>
    <property type="match status" value="1"/>
</dbReference>
<dbReference type="HAMAP" id="MF_00595">
    <property type="entry name" value="PEPcase_type1"/>
    <property type="match status" value="1"/>
</dbReference>
<dbReference type="InterPro" id="IPR021135">
    <property type="entry name" value="PEP_COase"/>
</dbReference>
<dbReference type="InterPro" id="IPR022805">
    <property type="entry name" value="PEP_COase_bac/pln-type"/>
</dbReference>
<dbReference type="InterPro" id="IPR018129">
    <property type="entry name" value="PEP_COase_Lys_AS"/>
</dbReference>
<dbReference type="InterPro" id="IPR033129">
    <property type="entry name" value="PEPCASE_His_AS"/>
</dbReference>
<dbReference type="InterPro" id="IPR015813">
    <property type="entry name" value="Pyrv/PenolPyrv_kinase-like_dom"/>
</dbReference>
<dbReference type="NCBIfam" id="NF000584">
    <property type="entry name" value="PRK00009.1"/>
    <property type="match status" value="1"/>
</dbReference>
<dbReference type="PANTHER" id="PTHR30523">
    <property type="entry name" value="PHOSPHOENOLPYRUVATE CARBOXYLASE"/>
    <property type="match status" value="1"/>
</dbReference>
<dbReference type="PANTHER" id="PTHR30523:SF6">
    <property type="entry name" value="PHOSPHOENOLPYRUVATE CARBOXYLASE"/>
    <property type="match status" value="1"/>
</dbReference>
<dbReference type="Pfam" id="PF00311">
    <property type="entry name" value="PEPcase"/>
    <property type="match status" value="1"/>
</dbReference>
<dbReference type="PRINTS" id="PR00150">
    <property type="entry name" value="PEPCARBXLASE"/>
</dbReference>
<dbReference type="SUPFAM" id="SSF51621">
    <property type="entry name" value="Phosphoenolpyruvate/pyruvate domain"/>
    <property type="match status" value="1"/>
</dbReference>
<dbReference type="PROSITE" id="PS00781">
    <property type="entry name" value="PEPCASE_1"/>
    <property type="match status" value="1"/>
</dbReference>
<dbReference type="PROSITE" id="PS00393">
    <property type="entry name" value="PEPCASE_2"/>
    <property type="match status" value="1"/>
</dbReference>
<name>CAPP_XANCP</name>
<protein>
    <recommendedName>
        <fullName evidence="1">Phosphoenolpyruvate carboxylase</fullName>
        <shortName evidence="1">PEPC</shortName>
        <shortName evidence="1">PEPCase</shortName>
        <ecNumber evidence="1">4.1.1.31</ecNumber>
    </recommendedName>
</protein>
<sequence>MNEYRSSLVFATPDVPLRDDVRRLGALVGDLLAEQVSADFLEEIERIRTTAIARRESDTPPAGLLSLLEGREPRAAEALVRAFSTYFQVVNIAERVHRIRRRRDYQRSGTDTPQPEGLHDALRRLKAQGVTLDELSEWLPRIDVEPVFTAHPTEAVRRALLEKEQLMVASLVDNLDGMRTPNERATDAARFRMALTASWQTADSSPVRPTVEDEREHVGFYLTQVLYRVIPVMYETLEHAIEETYGSTLALPRLLRFGTWVGGDMDGNPNVDAHTIAGTLDAQRRAVLDRYLNELWQLASLLSQSTTLVAVSPALSAQLERYQALLPDAAARSRPRHGDMPYRLLNDLMRARLQATLDDADGAYAAPAELEHDLQLILDSLEVNKGLHAGWFAVRRLLWRVRSFGFHLARLDVRQESSVHARAVADALGQADWDSQDATHRAGLLGPYASGEQALPQVDDEGNARLDAVFAALADARTRHGADALGSYIISMAHNRADVLTVLALARRGGLVDDAGAVPLDIVPLFETVDDLRGGTGTVQDLLADPVYRQHLRARGDTQMVMLGYSDSGKDGGIAASRWGLQRAQVELLEAAAELGVRLTFFHGRGGSIVRGGGKTTRALDAAPRGSVDGRLRVTEQGEVIHRKYGIRALALRSLEQMTGAVLLSSLRPRAPEPREDAWRPVMDLVAERSTVAYRGFVGAPDFMQYFRLATPIDVIERMTLGSRPSRRLGQDAALSNLRAIPWVFAWSQARAVIPGWYGVGSGLQAAVEAGHEDSLREMAQDWPFFRTFLDDIAMVLSKGDLNIAELFSRLAGPLHARFFPRIRDELALTKHWVKTLLGQRSLLQHDPRLALSIRLRNPYIDPISVLQVDLLQRWRATDGEDEELLRALVACVNGVAQGVQNTG</sequence>
<reference key="1">
    <citation type="journal article" date="2002" name="Nature">
        <title>Comparison of the genomes of two Xanthomonas pathogens with differing host specificities.</title>
        <authorList>
            <person name="da Silva A.C.R."/>
            <person name="Ferro J.A."/>
            <person name="Reinach F.C."/>
            <person name="Farah C.S."/>
            <person name="Furlan L.R."/>
            <person name="Quaggio R.B."/>
            <person name="Monteiro-Vitorello C.B."/>
            <person name="Van Sluys M.A."/>
            <person name="Almeida N.F. Jr."/>
            <person name="Alves L.M.C."/>
            <person name="do Amaral A.M."/>
            <person name="Bertolini M.C."/>
            <person name="Camargo L.E.A."/>
            <person name="Camarotte G."/>
            <person name="Cannavan F."/>
            <person name="Cardozo J."/>
            <person name="Chambergo F."/>
            <person name="Ciapina L.P."/>
            <person name="Cicarelli R.M.B."/>
            <person name="Coutinho L.L."/>
            <person name="Cursino-Santos J.R."/>
            <person name="El-Dorry H."/>
            <person name="Faria J.B."/>
            <person name="Ferreira A.J.S."/>
            <person name="Ferreira R.C.C."/>
            <person name="Ferro M.I.T."/>
            <person name="Formighieri E.F."/>
            <person name="Franco M.C."/>
            <person name="Greggio C.C."/>
            <person name="Gruber A."/>
            <person name="Katsuyama A.M."/>
            <person name="Kishi L.T."/>
            <person name="Leite R.P."/>
            <person name="Lemos E.G.M."/>
            <person name="Lemos M.V.F."/>
            <person name="Locali E.C."/>
            <person name="Machado M.A."/>
            <person name="Madeira A.M.B.N."/>
            <person name="Martinez-Rossi N.M."/>
            <person name="Martins E.C."/>
            <person name="Meidanis J."/>
            <person name="Menck C.F.M."/>
            <person name="Miyaki C.Y."/>
            <person name="Moon D.H."/>
            <person name="Moreira L.M."/>
            <person name="Novo M.T.M."/>
            <person name="Okura V.K."/>
            <person name="Oliveira M.C."/>
            <person name="Oliveira V.R."/>
            <person name="Pereira H.A."/>
            <person name="Rossi A."/>
            <person name="Sena J.A.D."/>
            <person name="Silva C."/>
            <person name="de Souza R.F."/>
            <person name="Spinola L.A.F."/>
            <person name="Takita M.A."/>
            <person name="Tamura R.E."/>
            <person name="Teixeira E.C."/>
            <person name="Tezza R.I.D."/>
            <person name="Trindade dos Santos M."/>
            <person name="Truffi D."/>
            <person name="Tsai S.M."/>
            <person name="White F.F."/>
            <person name="Setubal J.C."/>
            <person name="Kitajima J.P."/>
        </authorList>
    </citation>
    <scope>NUCLEOTIDE SEQUENCE [LARGE SCALE GENOMIC DNA]</scope>
    <source>
        <strain>ATCC 33913 / DSM 3586 / NCPPB 528 / LMG 568 / P 25</strain>
    </source>
</reference>
<gene>
    <name evidence="1" type="primary">ppc</name>
    <name type="ordered locus">XCC0754</name>
</gene>
<comment type="function">
    <text evidence="1">Forms oxaloacetate, a four-carbon dicarboxylic acid source for the tricarboxylic acid cycle.</text>
</comment>
<comment type="catalytic activity">
    <reaction evidence="1">
        <text>oxaloacetate + phosphate = phosphoenolpyruvate + hydrogencarbonate</text>
        <dbReference type="Rhea" id="RHEA:28370"/>
        <dbReference type="ChEBI" id="CHEBI:16452"/>
        <dbReference type="ChEBI" id="CHEBI:17544"/>
        <dbReference type="ChEBI" id="CHEBI:43474"/>
        <dbReference type="ChEBI" id="CHEBI:58702"/>
        <dbReference type="EC" id="4.1.1.31"/>
    </reaction>
</comment>
<comment type="cofactor">
    <cofactor evidence="1">
        <name>Mg(2+)</name>
        <dbReference type="ChEBI" id="CHEBI:18420"/>
    </cofactor>
</comment>
<comment type="similarity">
    <text evidence="1">Belongs to the PEPCase type 1 family.</text>
</comment>
<proteinExistence type="inferred from homology"/>
<organism>
    <name type="scientific">Xanthomonas campestris pv. campestris (strain ATCC 33913 / DSM 3586 / NCPPB 528 / LMG 568 / P 25)</name>
    <dbReference type="NCBI Taxonomy" id="190485"/>
    <lineage>
        <taxon>Bacteria</taxon>
        <taxon>Pseudomonadati</taxon>
        <taxon>Pseudomonadota</taxon>
        <taxon>Gammaproteobacteria</taxon>
        <taxon>Lysobacterales</taxon>
        <taxon>Lysobacteraceae</taxon>
        <taxon>Xanthomonas</taxon>
    </lineage>
</organism>
<keyword id="KW-0120">Carbon dioxide fixation</keyword>
<keyword id="KW-0456">Lyase</keyword>
<keyword id="KW-0460">Magnesium</keyword>
<keyword id="KW-1185">Reference proteome</keyword>